<organism>
    <name type="scientific">Schizosaccharomyces pombe (strain 972 / ATCC 24843)</name>
    <name type="common">Fission yeast</name>
    <dbReference type="NCBI Taxonomy" id="284812"/>
    <lineage>
        <taxon>Eukaryota</taxon>
        <taxon>Fungi</taxon>
        <taxon>Dikarya</taxon>
        <taxon>Ascomycota</taxon>
        <taxon>Taphrinomycotina</taxon>
        <taxon>Schizosaccharomycetes</taxon>
        <taxon>Schizosaccharomycetales</taxon>
        <taxon>Schizosaccharomycetaceae</taxon>
        <taxon>Schizosaccharomyces</taxon>
    </lineage>
</organism>
<protein>
    <recommendedName>
        <fullName>Ribosome biogenesis protein nsa1</fullName>
    </recommendedName>
</protein>
<keyword id="KW-0002">3D-structure</keyword>
<keyword id="KW-0539">Nucleus</keyword>
<keyword id="KW-1185">Reference proteome</keyword>
<keyword id="KW-0690">Ribosome biogenesis</keyword>
<keyword id="KW-0698">rRNA processing</keyword>
<dbReference type="EMBL" id="CU329671">
    <property type="protein sequence ID" value="CAB36877.1"/>
    <property type="molecule type" value="Genomic_DNA"/>
</dbReference>
<dbReference type="PIR" id="T40704">
    <property type="entry name" value="T40704"/>
</dbReference>
<dbReference type="RefSeq" id="NP_595647.1">
    <property type="nucleotide sequence ID" value="NM_001021541.2"/>
</dbReference>
<dbReference type="PDB" id="8ETH">
    <property type="method" value="EM"/>
    <property type="resolution" value="3.80 A"/>
    <property type="chains" value="5=1-387"/>
</dbReference>
<dbReference type="PDB" id="8ETI">
    <property type="method" value="EM"/>
    <property type="resolution" value="3.70 A"/>
    <property type="chains" value="5=1-387"/>
</dbReference>
<dbReference type="PDB" id="8EUP">
    <property type="method" value="EM"/>
    <property type="resolution" value="3.10 A"/>
    <property type="chains" value="5=1-387"/>
</dbReference>
<dbReference type="PDB" id="8EUY">
    <property type="method" value="EM"/>
    <property type="resolution" value="3.00 A"/>
    <property type="chains" value="5=1-387"/>
</dbReference>
<dbReference type="PDB" id="8EV3">
    <property type="method" value="EM"/>
    <property type="resolution" value="3.00 A"/>
    <property type="chains" value="5=1-387"/>
</dbReference>
<dbReference type="PDBsum" id="8ETH"/>
<dbReference type="PDBsum" id="8ETI"/>
<dbReference type="PDBsum" id="8EUP"/>
<dbReference type="PDBsum" id="8EUY"/>
<dbReference type="PDBsum" id="8EV3"/>
<dbReference type="SMR" id="O94698"/>
<dbReference type="BioGRID" id="277678">
    <property type="interactions" value="13"/>
</dbReference>
<dbReference type="FunCoup" id="O94698">
    <property type="interactions" value="286"/>
</dbReference>
<dbReference type="STRING" id="284812.O94698"/>
<dbReference type="iPTMnet" id="O94698"/>
<dbReference type="PaxDb" id="4896-SPBC83.15.1"/>
<dbReference type="EnsemblFungi" id="SPBC83.15.1">
    <property type="protein sequence ID" value="SPBC83.15.1:pep"/>
    <property type="gene ID" value="SPBC83.15"/>
</dbReference>
<dbReference type="GeneID" id="2541163"/>
<dbReference type="KEGG" id="spo:2541163"/>
<dbReference type="PomBase" id="SPBC83.15"/>
<dbReference type="VEuPathDB" id="FungiDB:SPBC83.15"/>
<dbReference type="eggNOG" id="KOG3881">
    <property type="taxonomic scope" value="Eukaryota"/>
</dbReference>
<dbReference type="HOGENOM" id="CLU_033769_4_0_1"/>
<dbReference type="InParanoid" id="O94698"/>
<dbReference type="OMA" id="KNVCRMR"/>
<dbReference type="PhylomeDB" id="O94698"/>
<dbReference type="PRO" id="PR:O94698"/>
<dbReference type="Proteomes" id="UP000002485">
    <property type="component" value="Chromosome II"/>
</dbReference>
<dbReference type="GO" id="GO:0005730">
    <property type="term" value="C:nucleolus"/>
    <property type="evidence" value="ECO:0000314"/>
    <property type="project" value="PomBase"/>
</dbReference>
<dbReference type="GO" id="GO:0005634">
    <property type="term" value="C:nucleus"/>
    <property type="evidence" value="ECO:0007005"/>
    <property type="project" value="PomBase"/>
</dbReference>
<dbReference type="GO" id="GO:0030684">
    <property type="term" value="C:preribosome"/>
    <property type="evidence" value="ECO:0000314"/>
    <property type="project" value="PomBase"/>
</dbReference>
<dbReference type="GO" id="GO:0030687">
    <property type="term" value="C:preribosome, large subunit precursor"/>
    <property type="evidence" value="ECO:0000318"/>
    <property type="project" value="GO_Central"/>
</dbReference>
<dbReference type="GO" id="GO:0042273">
    <property type="term" value="P:ribosomal large subunit biogenesis"/>
    <property type="evidence" value="ECO:0000318"/>
    <property type="project" value="GO_Central"/>
</dbReference>
<dbReference type="GO" id="GO:0006364">
    <property type="term" value="P:rRNA processing"/>
    <property type="evidence" value="ECO:0007669"/>
    <property type="project" value="UniProtKB-KW"/>
</dbReference>
<dbReference type="FunFam" id="2.130.10.10:FF:001569">
    <property type="entry name" value="WD repeat-containing protein 74-like Protein"/>
    <property type="match status" value="1"/>
</dbReference>
<dbReference type="Gene3D" id="2.130.10.10">
    <property type="entry name" value="YVTN repeat-like/Quinoprotein amine dehydrogenase"/>
    <property type="match status" value="2"/>
</dbReference>
<dbReference type="InterPro" id="IPR015943">
    <property type="entry name" value="WD40/YVTN_repeat-like_dom_sf"/>
</dbReference>
<dbReference type="InterPro" id="IPR036322">
    <property type="entry name" value="WD40_repeat_dom_sf"/>
</dbReference>
<dbReference type="InterPro" id="IPR001680">
    <property type="entry name" value="WD40_rpt"/>
</dbReference>
<dbReference type="InterPro" id="IPR037379">
    <property type="entry name" value="WDR74/Nsa1"/>
</dbReference>
<dbReference type="PANTHER" id="PTHR16038">
    <property type="entry name" value="NOP SEVEN ASSOCIATED PROTEIN 1"/>
    <property type="match status" value="1"/>
</dbReference>
<dbReference type="PANTHER" id="PTHR16038:SF4">
    <property type="entry name" value="WD REPEAT-CONTAINING PROTEIN 74"/>
    <property type="match status" value="1"/>
</dbReference>
<dbReference type="SMART" id="SM00320">
    <property type="entry name" value="WD40"/>
    <property type="match status" value="3"/>
</dbReference>
<dbReference type="SUPFAM" id="SSF50978">
    <property type="entry name" value="WD40 repeat-like"/>
    <property type="match status" value="1"/>
</dbReference>
<reference key="1">
    <citation type="journal article" date="2002" name="Nature">
        <title>The genome sequence of Schizosaccharomyces pombe.</title>
        <authorList>
            <person name="Wood V."/>
            <person name="Gwilliam R."/>
            <person name="Rajandream M.A."/>
            <person name="Lyne M.H."/>
            <person name="Lyne R."/>
            <person name="Stewart A."/>
            <person name="Sgouros J.G."/>
            <person name="Peat N."/>
            <person name="Hayles J."/>
            <person name="Baker S.G."/>
            <person name="Basham D."/>
            <person name="Bowman S."/>
            <person name="Brooks K."/>
            <person name="Brown D."/>
            <person name="Brown S."/>
            <person name="Chillingworth T."/>
            <person name="Churcher C.M."/>
            <person name="Collins M."/>
            <person name="Connor R."/>
            <person name="Cronin A."/>
            <person name="Davis P."/>
            <person name="Feltwell T."/>
            <person name="Fraser A."/>
            <person name="Gentles S."/>
            <person name="Goble A."/>
            <person name="Hamlin N."/>
            <person name="Harris D.E."/>
            <person name="Hidalgo J."/>
            <person name="Hodgson G."/>
            <person name="Holroyd S."/>
            <person name="Hornsby T."/>
            <person name="Howarth S."/>
            <person name="Huckle E.J."/>
            <person name="Hunt S."/>
            <person name="Jagels K."/>
            <person name="James K.D."/>
            <person name="Jones L."/>
            <person name="Jones M."/>
            <person name="Leather S."/>
            <person name="McDonald S."/>
            <person name="McLean J."/>
            <person name="Mooney P."/>
            <person name="Moule S."/>
            <person name="Mungall K.L."/>
            <person name="Murphy L.D."/>
            <person name="Niblett D."/>
            <person name="Odell C."/>
            <person name="Oliver K."/>
            <person name="O'Neil S."/>
            <person name="Pearson D."/>
            <person name="Quail M.A."/>
            <person name="Rabbinowitsch E."/>
            <person name="Rutherford K.M."/>
            <person name="Rutter S."/>
            <person name="Saunders D."/>
            <person name="Seeger K."/>
            <person name="Sharp S."/>
            <person name="Skelton J."/>
            <person name="Simmonds M.N."/>
            <person name="Squares R."/>
            <person name="Squares S."/>
            <person name="Stevens K."/>
            <person name="Taylor K."/>
            <person name="Taylor R.G."/>
            <person name="Tivey A."/>
            <person name="Walsh S.V."/>
            <person name="Warren T."/>
            <person name="Whitehead S."/>
            <person name="Woodward J.R."/>
            <person name="Volckaert G."/>
            <person name="Aert R."/>
            <person name="Robben J."/>
            <person name="Grymonprez B."/>
            <person name="Weltjens I."/>
            <person name="Vanstreels E."/>
            <person name="Rieger M."/>
            <person name="Schaefer M."/>
            <person name="Mueller-Auer S."/>
            <person name="Gabel C."/>
            <person name="Fuchs M."/>
            <person name="Duesterhoeft A."/>
            <person name="Fritzc C."/>
            <person name="Holzer E."/>
            <person name="Moestl D."/>
            <person name="Hilbert H."/>
            <person name="Borzym K."/>
            <person name="Langer I."/>
            <person name="Beck A."/>
            <person name="Lehrach H."/>
            <person name="Reinhardt R."/>
            <person name="Pohl T.M."/>
            <person name="Eger P."/>
            <person name="Zimmermann W."/>
            <person name="Wedler H."/>
            <person name="Wambutt R."/>
            <person name="Purnelle B."/>
            <person name="Goffeau A."/>
            <person name="Cadieu E."/>
            <person name="Dreano S."/>
            <person name="Gloux S."/>
            <person name="Lelaure V."/>
            <person name="Mottier S."/>
            <person name="Galibert F."/>
            <person name="Aves S.J."/>
            <person name="Xiang Z."/>
            <person name="Hunt C."/>
            <person name="Moore K."/>
            <person name="Hurst S.M."/>
            <person name="Lucas M."/>
            <person name="Rochet M."/>
            <person name="Gaillardin C."/>
            <person name="Tallada V.A."/>
            <person name="Garzon A."/>
            <person name="Thode G."/>
            <person name="Daga R.R."/>
            <person name="Cruzado L."/>
            <person name="Jimenez J."/>
            <person name="Sanchez M."/>
            <person name="del Rey F."/>
            <person name="Benito J."/>
            <person name="Dominguez A."/>
            <person name="Revuelta J.L."/>
            <person name="Moreno S."/>
            <person name="Armstrong J."/>
            <person name="Forsburg S.L."/>
            <person name="Cerutti L."/>
            <person name="Lowe T."/>
            <person name="McCombie W.R."/>
            <person name="Paulsen I."/>
            <person name="Potashkin J."/>
            <person name="Shpakovski G.V."/>
            <person name="Ussery D."/>
            <person name="Barrell B.G."/>
            <person name="Nurse P."/>
        </authorList>
    </citation>
    <scope>NUCLEOTIDE SEQUENCE [LARGE SCALE GENOMIC DNA]</scope>
    <source>
        <strain>972 / ATCC 24843</strain>
    </source>
</reference>
<accession>O94698</accession>
<name>NSA1_SCHPO</name>
<sequence length="387" mass="43767">MKLLLGDEIGQLKFIEIKKGTDTSNPESEAPVIQKFGELDREKGVLFMLKHEMNVFVARKNGTIECWNVNQEPPILSSLWQLDSSLLETASIVSMKYSNGWLMLALSDGNLLFRHIESSKLRKLQLHGPLSAVELHPRIPGIIAAGGKENDVCLYSCNPTCKSNIDELELWRTENVVKVFQGKNVKNDSLNLRVRVWITGIVFTEDIINVIDGKSEDDESLCFHFATITHYGQLRFYDTKHGRRPVSTFDVSTSPLSHVGLLPSIKLLYFADKRAQISIFDHSKKKVIGRFQGVKGAPSSIHCLGNVVAITGLDRNVRIFDADRKPLANAYIKALPTSIIVINERDAEIIKKEEELEAAKEEEEEIWRNMEQLEDTEDKKPSKRIKL</sequence>
<comment type="function">
    <text evidence="1">Involved in the biogenesis of the 60S ribosomal subunit.</text>
</comment>
<comment type="subunit">
    <text evidence="1">Component of the pre-66S ribosomal particle.</text>
</comment>
<comment type="subcellular location">
    <subcellularLocation>
        <location evidence="1">Nucleus</location>
        <location evidence="1">Nucleolus</location>
    </subcellularLocation>
</comment>
<comment type="similarity">
    <text evidence="3">Belongs to the NSA1 family.</text>
</comment>
<feature type="chain" id="PRO_0000320403" description="Ribosome biogenesis protein nsa1">
    <location>
        <begin position="1"/>
        <end position="387"/>
    </location>
</feature>
<feature type="region of interest" description="Disordered" evidence="2">
    <location>
        <begin position="368"/>
        <end position="387"/>
    </location>
</feature>
<feature type="strand" evidence="5">
    <location>
        <begin position="2"/>
        <end position="7"/>
    </location>
</feature>
<feature type="strand" evidence="5">
    <location>
        <begin position="10"/>
        <end position="15"/>
    </location>
</feature>
<feature type="strand" evidence="5">
    <location>
        <begin position="33"/>
        <end position="37"/>
    </location>
</feature>
<feature type="helix" evidence="5">
    <location>
        <begin position="41"/>
        <end position="43"/>
    </location>
</feature>
<feature type="strand" evidence="5">
    <location>
        <begin position="45"/>
        <end position="47"/>
    </location>
</feature>
<feature type="strand" evidence="5">
    <location>
        <begin position="54"/>
        <end position="59"/>
    </location>
</feature>
<feature type="strand" evidence="5">
    <location>
        <begin position="65"/>
        <end position="68"/>
    </location>
</feature>
<feature type="strand" evidence="5">
    <location>
        <begin position="71"/>
        <end position="73"/>
    </location>
</feature>
<feature type="strand" evidence="5">
    <location>
        <begin position="75"/>
        <end position="79"/>
    </location>
</feature>
<feature type="helix" evidence="5">
    <location>
        <begin position="84"/>
        <end position="86"/>
    </location>
</feature>
<feature type="strand" evidence="5">
    <location>
        <begin position="96"/>
        <end position="98"/>
    </location>
</feature>
<feature type="strand" evidence="5">
    <location>
        <begin position="101"/>
        <end position="103"/>
    </location>
</feature>
<feature type="strand" evidence="5">
    <location>
        <begin position="111"/>
        <end position="115"/>
    </location>
</feature>
<feature type="turn" evidence="5">
    <location>
        <begin position="116"/>
        <end position="118"/>
    </location>
</feature>
<feature type="strand" evidence="5">
    <location>
        <begin position="121"/>
        <end position="124"/>
    </location>
</feature>
<feature type="strand" evidence="5">
    <location>
        <begin position="131"/>
        <end position="135"/>
    </location>
</feature>
<feature type="strand" evidence="5">
    <location>
        <begin position="137"/>
        <end position="148"/>
    </location>
</feature>
<feature type="strand" evidence="5">
    <location>
        <begin position="150"/>
        <end position="159"/>
    </location>
</feature>
<feature type="turn" evidence="5">
    <location>
        <begin position="168"/>
        <end position="171"/>
    </location>
</feature>
<feature type="turn" evidence="5">
    <location>
        <begin position="173"/>
        <end position="175"/>
    </location>
</feature>
<feature type="strand" evidence="5">
    <location>
        <begin position="177"/>
        <end position="181"/>
    </location>
</feature>
<feature type="strand" evidence="5">
    <location>
        <begin position="197"/>
        <end position="203"/>
    </location>
</feature>
<feature type="helix" evidence="5">
    <location>
        <begin position="205"/>
        <end position="207"/>
    </location>
</feature>
<feature type="strand" evidence="5">
    <location>
        <begin position="224"/>
        <end position="229"/>
    </location>
</feature>
<feature type="strand" evidence="5">
    <location>
        <begin position="234"/>
        <end position="238"/>
    </location>
</feature>
<feature type="turn" evidence="5">
    <location>
        <begin position="239"/>
        <end position="241"/>
    </location>
</feature>
<feature type="strand" evidence="4">
    <location>
        <begin position="242"/>
        <end position="244"/>
    </location>
</feature>
<feature type="strand" evidence="5">
    <location>
        <begin position="246"/>
        <end position="249"/>
    </location>
</feature>
<feature type="strand" evidence="5">
    <location>
        <begin position="256"/>
        <end position="262"/>
    </location>
</feature>
<feature type="turn" evidence="5">
    <location>
        <begin position="263"/>
        <end position="266"/>
    </location>
</feature>
<feature type="strand" evidence="5">
    <location>
        <begin position="267"/>
        <end position="272"/>
    </location>
</feature>
<feature type="turn" evidence="6">
    <location>
        <begin position="273"/>
        <end position="275"/>
    </location>
</feature>
<feature type="strand" evidence="5">
    <location>
        <begin position="277"/>
        <end position="281"/>
    </location>
</feature>
<feature type="turn" evidence="5">
    <location>
        <begin position="282"/>
        <end position="285"/>
    </location>
</feature>
<feature type="strand" evidence="5">
    <location>
        <begin position="286"/>
        <end position="290"/>
    </location>
</feature>
<feature type="strand" evidence="5">
    <location>
        <begin position="298"/>
        <end position="304"/>
    </location>
</feature>
<feature type="strand" evidence="5">
    <location>
        <begin position="307"/>
        <end position="312"/>
    </location>
</feature>
<feature type="strand" evidence="5">
    <location>
        <begin position="315"/>
        <end position="321"/>
    </location>
</feature>
<feature type="strand" evidence="5">
    <location>
        <begin position="326"/>
        <end position="331"/>
    </location>
</feature>
<feature type="strand" evidence="5">
    <location>
        <begin position="336"/>
        <end position="343"/>
    </location>
</feature>
<proteinExistence type="evidence at protein level"/>
<evidence type="ECO:0000250" key="1"/>
<evidence type="ECO:0000256" key="2">
    <source>
        <dbReference type="SAM" id="MobiDB-lite"/>
    </source>
</evidence>
<evidence type="ECO:0000305" key="3"/>
<evidence type="ECO:0007829" key="4">
    <source>
        <dbReference type="PDB" id="8EUP"/>
    </source>
</evidence>
<evidence type="ECO:0007829" key="5">
    <source>
        <dbReference type="PDB" id="8EUY"/>
    </source>
</evidence>
<evidence type="ECO:0007829" key="6">
    <source>
        <dbReference type="PDB" id="8EV3"/>
    </source>
</evidence>
<gene>
    <name type="primary">nsa1</name>
    <name type="ORF">SPBC83.15</name>
</gene>